<keyword id="KW-0119">Carbohydrate metabolism</keyword>
<keyword id="KW-0963">Cytoplasm</keyword>
<keyword id="KW-0313">Glucose metabolism</keyword>
<keyword id="KW-0413">Isomerase</keyword>
<keyword id="KW-0460">Magnesium</keyword>
<keyword id="KW-0479">Metal-binding</keyword>
<keyword id="KW-0597">Phosphoprotein</keyword>
<reference key="1">
    <citation type="journal article" date="1994" name="J. Biol. Chem.">
        <title>Lipooligosaccharide biosynthesis in pathogenic Neisseria. Cloning, identification, and characterization of the phosphoglucomutase gene.</title>
        <authorList>
            <person name="Zhou D."/>
            <person name="Stephens D.S."/>
            <person name="Gibson B.W."/>
            <person name="Engstrom J.J."/>
            <person name="McAllister C.F."/>
            <person name="Lee F.K.N."/>
            <person name="Apicella M.A."/>
        </authorList>
    </citation>
    <scope>NUCLEOTIDE SEQUENCE [GENOMIC DNA]</scope>
    <source>
        <strain>1291</strain>
    </source>
</reference>
<reference key="2">
    <citation type="journal article" date="1994" name="J. Bacteriol.">
        <title>Role of phosphoglucomutase in lipooligosaccharide biosynthesis in Neisseria gonorrhoeae.</title>
        <authorList>
            <person name="Sandlin R.C."/>
            <person name="Stein D.C."/>
        </authorList>
    </citation>
    <scope>NUCLEOTIDE SEQUENCE [GENOMIC DNA]</scope>
    <source>
        <strain>1291</strain>
    </source>
</reference>
<sequence length="460" mass="49466">MASITRDIFKAYDIRGIVGKTLTDDAAYFIGRAIAAKAAEKGIARIALGRDGRLSGPELMEHIQRGLTDSGISVLNVGMVTTPMLYFAAVNECGGSGVMITGSHNPPDYNGFKMMLGGDTLAGEAIQELLAIVEKDGFVAADKQGSVTEKDISGAYHDHIVGHVKLKRPINIAIDAGNGVGGAFAGKLYKGLGNEVTELFCEVDGNFPNHHPDPSKPENLQDLIAALKNGDAEIGLAFDGDADRLGVVTKDGNIIYPDRQLMLFAQDVLNRNPGAKVIFDVKSTRLLAPWIKEHGGEAIMEKTGHSFIKSAMKKTGALVAGEMSGHVFFKERWFGFDDGLYAGARLLEILSASDNPSEVLDNLPQSISTPELNISLPEGSNGHQVIEELAAKAEFEGATEIITIDGLRVEFPDGFGLMRASNTTPILVLRFEADTQAAIERIQNRFKAVIESNPHLIWPL</sequence>
<comment type="function">
    <text>This enzyme participates in both the breakdown and synthesis of glucose.</text>
</comment>
<comment type="catalytic activity">
    <reaction>
        <text>alpha-D-glucose 1-phosphate = alpha-D-glucose 6-phosphate</text>
        <dbReference type="Rhea" id="RHEA:23536"/>
        <dbReference type="ChEBI" id="CHEBI:58225"/>
        <dbReference type="ChEBI" id="CHEBI:58601"/>
        <dbReference type="EC" id="5.4.2.2"/>
    </reaction>
</comment>
<comment type="cofactor">
    <cofactor evidence="1">
        <name>Mg(2+)</name>
        <dbReference type="ChEBI" id="CHEBI:18420"/>
    </cofactor>
    <text evidence="1">Binds 1 Mg(2+) ion per subunit.</text>
</comment>
<comment type="subcellular location">
    <subcellularLocation>
        <location evidence="1">Cytoplasm</location>
    </subcellularLocation>
</comment>
<comment type="similarity">
    <text evidence="3">Belongs to the phosphohexose mutase family.</text>
</comment>
<accession>P40390</accession>
<gene>
    <name type="primary">pgm</name>
</gene>
<name>PGM_NEIGO</name>
<organism>
    <name type="scientific">Neisseria gonorrhoeae</name>
    <dbReference type="NCBI Taxonomy" id="485"/>
    <lineage>
        <taxon>Bacteria</taxon>
        <taxon>Pseudomonadati</taxon>
        <taxon>Pseudomonadota</taxon>
        <taxon>Betaproteobacteria</taxon>
        <taxon>Neisseriales</taxon>
        <taxon>Neisseriaceae</taxon>
        <taxon>Neisseria</taxon>
    </lineage>
</organism>
<proteinExistence type="inferred from homology"/>
<protein>
    <recommendedName>
        <fullName>Phosphoglucomutase</fullName>
        <shortName>PGM</shortName>
        <ecNumber>5.4.2.2</ecNumber>
    </recommendedName>
    <alternativeName>
        <fullName>Glucose phosphomutase</fullName>
    </alternativeName>
</protein>
<dbReference type="EC" id="5.4.2.2"/>
<dbReference type="EMBL" id="U02489">
    <property type="protein sequence ID" value="AAA20588.1"/>
    <property type="molecule type" value="Genomic_DNA"/>
</dbReference>
<dbReference type="EMBL" id="L23426">
    <property type="protein sequence ID" value="AAA20399.1"/>
    <property type="molecule type" value="Unassigned_DNA"/>
</dbReference>
<dbReference type="PIR" id="A53614">
    <property type="entry name" value="A53614"/>
</dbReference>
<dbReference type="RefSeq" id="WP_003687793.1">
    <property type="nucleotide sequence ID" value="NZ_SURI01000001.1"/>
</dbReference>
<dbReference type="SMR" id="P40390"/>
<dbReference type="GO" id="GO:0005737">
    <property type="term" value="C:cytoplasm"/>
    <property type="evidence" value="ECO:0007669"/>
    <property type="project" value="UniProtKB-SubCell"/>
</dbReference>
<dbReference type="GO" id="GO:0000287">
    <property type="term" value="F:magnesium ion binding"/>
    <property type="evidence" value="ECO:0007669"/>
    <property type="project" value="InterPro"/>
</dbReference>
<dbReference type="GO" id="GO:0004614">
    <property type="term" value="F:phosphoglucomutase activity"/>
    <property type="evidence" value="ECO:0007669"/>
    <property type="project" value="UniProtKB-EC"/>
</dbReference>
<dbReference type="GO" id="GO:0006006">
    <property type="term" value="P:glucose metabolic process"/>
    <property type="evidence" value="ECO:0007669"/>
    <property type="project" value="UniProtKB-KW"/>
</dbReference>
<dbReference type="CDD" id="cd03089">
    <property type="entry name" value="PMM_PGM"/>
    <property type="match status" value="1"/>
</dbReference>
<dbReference type="Gene3D" id="3.40.120.10">
    <property type="entry name" value="Alpha-D-Glucose-1,6-Bisphosphate, subunit A, domain 3"/>
    <property type="match status" value="3"/>
</dbReference>
<dbReference type="Gene3D" id="3.30.310.50">
    <property type="entry name" value="Alpha-D-phosphohexomutase, C-terminal domain"/>
    <property type="match status" value="1"/>
</dbReference>
<dbReference type="InterPro" id="IPR005844">
    <property type="entry name" value="A-D-PHexomutase_a/b/a-I"/>
</dbReference>
<dbReference type="InterPro" id="IPR016055">
    <property type="entry name" value="A-D-PHexomutase_a/b/a-I/II/III"/>
</dbReference>
<dbReference type="InterPro" id="IPR005845">
    <property type="entry name" value="A-D-PHexomutase_a/b/a-II"/>
</dbReference>
<dbReference type="InterPro" id="IPR005846">
    <property type="entry name" value="A-D-PHexomutase_a/b/a-III"/>
</dbReference>
<dbReference type="InterPro" id="IPR005843">
    <property type="entry name" value="A-D-PHexomutase_C"/>
</dbReference>
<dbReference type="InterPro" id="IPR036900">
    <property type="entry name" value="A-D-PHexomutase_C_sf"/>
</dbReference>
<dbReference type="InterPro" id="IPR016066">
    <property type="entry name" value="A-D-PHexomutase_CS"/>
</dbReference>
<dbReference type="InterPro" id="IPR005841">
    <property type="entry name" value="Alpha-D-phosphohexomutase_SF"/>
</dbReference>
<dbReference type="PANTHER" id="PTHR43771">
    <property type="entry name" value="PHOSPHOMANNOMUTASE"/>
    <property type="match status" value="1"/>
</dbReference>
<dbReference type="PANTHER" id="PTHR43771:SF2">
    <property type="entry name" value="PHOSPHOMANNOMUTASE_PHOSPHOGLUCOMUTASE"/>
    <property type="match status" value="1"/>
</dbReference>
<dbReference type="Pfam" id="PF02878">
    <property type="entry name" value="PGM_PMM_I"/>
    <property type="match status" value="1"/>
</dbReference>
<dbReference type="Pfam" id="PF02879">
    <property type="entry name" value="PGM_PMM_II"/>
    <property type="match status" value="1"/>
</dbReference>
<dbReference type="Pfam" id="PF02880">
    <property type="entry name" value="PGM_PMM_III"/>
    <property type="match status" value="1"/>
</dbReference>
<dbReference type="Pfam" id="PF00408">
    <property type="entry name" value="PGM_PMM_IV"/>
    <property type="match status" value="1"/>
</dbReference>
<dbReference type="PRINTS" id="PR00509">
    <property type="entry name" value="PGMPMM"/>
</dbReference>
<dbReference type="SUPFAM" id="SSF55957">
    <property type="entry name" value="Phosphoglucomutase, C-terminal domain"/>
    <property type="match status" value="1"/>
</dbReference>
<dbReference type="SUPFAM" id="SSF53738">
    <property type="entry name" value="Phosphoglucomutase, first 3 domains"/>
    <property type="match status" value="3"/>
</dbReference>
<dbReference type="PROSITE" id="PS00710">
    <property type="entry name" value="PGM_PMM"/>
    <property type="match status" value="1"/>
</dbReference>
<feature type="chain" id="PRO_0000147810" description="Phosphoglucomutase">
    <location>
        <begin position="1"/>
        <end position="460"/>
    </location>
</feature>
<feature type="active site" description="Phosphoserine intermediate" evidence="2">
    <location>
        <position position="103"/>
    </location>
</feature>
<feature type="binding site" evidence="2">
    <location>
        <begin position="103"/>
        <end position="104"/>
    </location>
    <ligand>
        <name>substrate</name>
    </ligand>
</feature>
<feature type="binding site" description="via phosphate group" evidence="2">
    <location>
        <position position="103"/>
    </location>
    <ligand>
        <name>Mg(2+)</name>
        <dbReference type="ChEBI" id="CHEBI:18420"/>
    </ligand>
</feature>
<feature type="binding site" evidence="2">
    <location>
        <position position="113"/>
    </location>
    <ligand>
        <name>substrate</name>
    </ligand>
</feature>
<feature type="binding site" evidence="2">
    <location>
        <position position="239"/>
    </location>
    <ligand>
        <name>Mg(2+)</name>
        <dbReference type="ChEBI" id="CHEBI:18420"/>
    </ligand>
</feature>
<feature type="binding site" evidence="2">
    <location>
        <position position="241"/>
    </location>
    <ligand>
        <name>Mg(2+)</name>
        <dbReference type="ChEBI" id="CHEBI:18420"/>
    </ligand>
</feature>
<feature type="binding site" evidence="2">
    <location>
        <begin position="243"/>
        <end position="244"/>
    </location>
    <ligand>
        <name>substrate</name>
    </ligand>
</feature>
<feature type="binding site" evidence="2">
    <location>
        <position position="243"/>
    </location>
    <ligand>
        <name>Mg(2+)</name>
        <dbReference type="ChEBI" id="CHEBI:18420"/>
    </ligand>
</feature>
<feature type="binding site" evidence="2">
    <location>
        <position position="303"/>
    </location>
    <ligand>
        <name>substrate</name>
    </ligand>
</feature>
<feature type="binding site" evidence="2">
    <location>
        <begin position="322"/>
        <end position="324"/>
    </location>
    <ligand>
        <name>substrate</name>
    </ligand>
</feature>
<evidence type="ECO:0000250" key="1"/>
<evidence type="ECO:0000250" key="2">
    <source>
        <dbReference type="UniProtKB" id="P00949"/>
    </source>
</evidence>
<evidence type="ECO:0000305" key="3"/>